<keyword id="KW-0963">Cytoplasm</keyword>
<keyword id="KW-0378">Hydrolase</keyword>
<keyword id="KW-0479">Metal-binding</keyword>
<keyword id="KW-0533">Nickel</keyword>
<sequence length="572" mass="61812">MSFKMDREEYAQHYGPTVGDSVRLGDTNLFAAIEKDFTVYGQESKFGGGKVLRDGMGVSATETRDNPSVVDTIITGATIIDYTGIIKADIGIRDGKIVAIGRGGNPDTMDNVDFVVGASTEAIAAEGLIVTAGGIDLHVHYISADLPEFGLDNGITTLFGGGTGPADGSNATTCTPGKFHITRMLQAVDDMPANFGFLAKGVGSETEVVEEQIKAGAAGIKTHEDWGATYAGIDNSLKVADKYDVSFAVHTDSLNEGGFMENTLESFQGRTVHTFHTEGSGGGHAPDIMVFAGKENILPSSTNPTNPYTTNAIGELLDMVMVCHHLDPKIPEDVSFAESRVRKQTVAAEDVLHDMGALSIMTSDAMAMGRVGEVAMRCWQLADKMKAQRGPLEGDSEFNDNNRIKRYVAKYTINPAITNGIADYIGSVEVGKFADLVIWEPAQFGAKPKLVLKGGMLTYGVMGDAGSSLPTPQPRIMRKLYGAYGQAVHETNLTFVSQYAYDHGIKEEIGLNKIVLPVKNTRNLTKRDMKLNDYAPKTIRIDPQTFDVFIDDELVTCEPIHTTSLSQRYFLF</sequence>
<gene>
    <name evidence="1" type="primary">ureC</name>
    <name type="ordered locus">Ssal_01900</name>
</gene>
<reference key="1">
    <citation type="journal article" date="1996" name="Infect. Immun.">
        <title>Streptococcus salivarius urease: genetic and biochemical characterization and expression in a dental plaque streptococcus.</title>
        <authorList>
            <person name="Chen Y.-Y.M."/>
            <person name="Clancy K.A."/>
            <person name="Burne R.A."/>
        </authorList>
    </citation>
    <scope>NUCLEOTIDE SEQUENCE [GENOMIC DNA]</scope>
    <scope>BIOPHYSICOCHEMICAL PROPERTIES</scope>
    <source>
        <strain>57.I</strain>
    </source>
</reference>
<reference key="2">
    <citation type="journal article" date="2011" name="J. Bacteriol.">
        <title>Complete genome sequence of the ureolytic Streptococcus salivarius strain 57.I.</title>
        <authorList>
            <person name="Geng J."/>
            <person name="Huang S.C."/>
            <person name="Li S."/>
            <person name="Hu S."/>
            <person name="Chen Y.Y."/>
        </authorList>
    </citation>
    <scope>NUCLEOTIDE SEQUENCE [LARGE SCALE GENOMIC DNA]</scope>
    <source>
        <strain>57.I</strain>
    </source>
</reference>
<reference key="3">
    <citation type="journal article" date="1996" name="FEMS Microbiol. Lett.">
        <title>Analysis of Streptococcus salivarius urease expression using continuous chemostat culture.</title>
        <authorList>
            <person name="Chen Y.-Y.M."/>
            <person name="Burne R.A."/>
        </authorList>
    </citation>
    <scope>NUCLEOTIDE SEQUENCE [GENOMIC DNA] OF 228-409</scope>
    <scope>INDUCTION</scope>
    <source>
        <strain>57.I</strain>
    </source>
</reference>
<reference key="4">
    <citation type="journal article" date="1998" name="J. Bacteriol.">
        <title>Transcriptional regulation of the Streptococcus salivarius 57.I urease operon.</title>
        <authorList>
            <person name="Chen Y.-Y.M."/>
            <person name="Weaver C.A."/>
            <person name="Mendelsohn D.R."/>
            <person name="Burne R.A."/>
        </authorList>
    </citation>
    <scope>INDUCTION</scope>
    <source>
        <strain>57.I</strain>
    </source>
</reference>
<reference key="5">
    <citation type="journal article" date="2000" name="J. Bacteriol.">
        <title>Dual functions of Streptococcus salivarius urease.</title>
        <authorList>
            <person name="Chen Y.-Y.M."/>
            <person name="Weaver C.A."/>
            <person name="Burne R.A."/>
        </authorList>
    </citation>
    <scope>FUNCTION</scope>
    <source>
        <strain>57.I</strain>
    </source>
</reference>
<evidence type="ECO:0000255" key="1">
    <source>
        <dbReference type="HAMAP-Rule" id="MF_01953"/>
    </source>
</evidence>
<evidence type="ECO:0000269" key="2">
    <source>
    </source>
</evidence>
<evidence type="ECO:0000269" key="3">
    <source>
    </source>
</evidence>
<evidence type="ECO:0000269" key="4">
    <source>
    </source>
</evidence>
<evidence type="ECO:0000269" key="5">
    <source>
    </source>
</evidence>
<evidence type="ECO:0000305" key="6"/>
<organism>
    <name type="scientific">Streptococcus salivarius (strain 57.I)</name>
    <dbReference type="NCBI Taxonomy" id="1046629"/>
    <lineage>
        <taxon>Bacteria</taxon>
        <taxon>Bacillati</taxon>
        <taxon>Bacillota</taxon>
        <taxon>Bacilli</taxon>
        <taxon>Lactobacillales</taxon>
        <taxon>Streptococcaceae</taxon>
        <taxon>Streptococcus</taxon>
    </lineage>
</organism>
<name>URE1_STRE5</name>
<dbReference type="EC" id="3.5.1.5" evidence="1"/>
<dbReference type="EMBL" id="U35248">
    <property type="protein sequence ID" value="AAC43564.1"/>
    <property type="molecule type" value="Genomic_DNA"/>
</dbReference>
<dbReference type="EMBL" id="CP002888">
    <property type="protein sequence ID" value="AEJ54136.1"/>
    <property type="status" value="ALT_INIT"/>
    <property type="molecule type" value="Genomic_DNA"/>
</dbReference>
<dbReference type="EMBL" id="U22950">
    <property type="protein sequence ID" value="AAB01507.1"/>
    <property type="molecule type" value="Genomic_DNA"/>
</dbReference>
<dbReference type="RefSeq" id="WP_002886560.1">
    <property type="nucleotide sequence ID" value="NC_017594.1"/>
</dbReference>
<dbReference type="SMR" id="P50047"/>
<dbReference type="MEROPS" id="M38.982"/>
<dbReference type="GeneID" id="93791472"/>
<dbReference type="KEGG" id="stf:Ssal_01900"/>
<dbReference type="PATRIC" id="fig|1046629.4.peg.1686"/>
<dbReference type="eggNOG" id="COG0804">
    <property type="taxonomic scope" value="Bacteria"/>
</dbReference>
<dbReference type="BioCyc" id="MetaCyc:MONOMER-182"/>
<dbReference type="SABIO-RK" id="P50047"/>
<dbReference type="UniPathway" id="UPA00258">
    <property type="reaction ID" value="UER00370"/>
</dbReference>
<dbReference type="GO" id="GO:0005737">
    <property type="term" value="C:cytoplasm"/>
    <property type="evidence" value="ECO:0007669"/>
    <property type="project" value="UniProtKB-SubCell"/>
</dbReference>
<dbReference type="GO" id="GO:0016151">
    <property type="term" value="F:nickel cation binding"/>
    <property type="evidence" value="ECO:0007669"/>
    <property type="project" value="UniProtKB-UniRule"/>
</dbReference>
<dbReference type="GO" id="GO:0009039">
    <property type="term" value="F:urease activity"/>
    <property type="evidence" value="ECO:0007669"/>
    <property type="project" value="UniProtKB-UniRule"/>
</dbReference>
<dbReference type="GO" id="GO:0043419">
    <property type="term" value="P:urea catabolic process"/>
    <property type="evidence" value="ECO:0007669"/>
    <property type="project" value="UniProtKB-UniRule"/>
</dbReference>
<dbReference type="CDD" id="cd00375">
    <property type="entry name" value="Urease_alpha"/>
    <property type="match status" value="1"/>
</dbReference>
<dbReference type="Gene3D" id="3.20.20.140">
    <property type="entry name" value="Metal-dependent hydrolases"/>
    <property type="match status" value="1"/>
</dbReference>
<dbReference type="Gene3D" id="2.30.40.10">
    <property type="entry name" value="Urease, subunit C, domain 1"/>
    <property type="match status" value="1"/>
</dbReference>
<dbReference type="HAMAP" id="MF_01953">
    <property type="entry name" value="Urease_alpha"/>
    <property type="match status" value="1"/>
</dbReference>
<dbReference type="InterPro" id="IPR006680">
    <property type="entry name" value="Amidohydro-rel"/>
</dbReference>
<dbReference type="InterPro" id="IPR011059">
    <property type="entry name" value="Metal-dep_hydrolase_composite"/>
</dbReference>
<dbReference type="InterPro" id="IPR032466">
    <property type="entry name" value="Metal_Hydrolase"/>
</dbReference>
<dbReference type="InterPro" id="IPR011612">
    <property type="entry name" value="Urease_alpha_N_dom"/>
</dbReference>
<dbReference type="InterPro" id="IPR050112">
    <property type="entry name" value="Urease_alpha_subunit"/>
</dbReference>
<dbReference type="InterPro" id="IPR017950">
    <property type="entry name" value="Urease_AS"/>
</dbReference>
<dbReference type="InterPro" id="IPR005848">
    <property type="entry name" value="Urease_asu"/>
</dbReference>
<dbReference type="InterPro" id="IPR017951">
    <property type="entry name" value="Urease_asu_c"/>
</dbReference>
<dbReference type="InterPro" id="IPR029754">
    <property type="entry name" value="Urease_Ni-bd"/>
</dbReference>
<dbReference type="NCBIfam" id="NF009686">
    <property type="entry name" value="PRK13207.1"/>
    <property type="match status" value="1"/>
</dbReference>
<dbReference type="NCBIfam" id="TIGR01792">
    <property type="entry name" value="urease_alph"/>
    <property type="match status" value="1"/>
</dbReference>
<dbReference type="PANTHER" id="PTHR43440">
    <property type="entry name" value="UREASE"/>
    <property type="match status" value="1"/>
</dbReference>
<dbReference type="PANTHER" id="PTHR43440:SF1">
    <property type="entry name" value="UREASE"/>
    <property type="match status" value="1"/>
</dbReference>
<dbReference type="Pfam" id="PF01979">
    <property type="entry name" value="Amidohydro_1"/>
    <property type="match status" value="1"/>
</dbReference>
<dbReference type="Pfam" id="PF00449">
    <property type="entry name" value="Urease_alpha"/>
    <property type="match status" value="1"/>
</dbReference>
<dbReference type="PRINTS" id="PR01752">
    <property type="entry name" value="UREASE"/>
</dbReference>
<dbReference type="SUPFAM" id="SSF51338">
    <property type="entry name" value="Composite domain of metallo-dependent hydrolases"/>
    <property type="match status" value="1"/>
</dbReference>
<dbReference type="SUPFAM" id="SSF51556">
    <property type="entry name" value="Metallo-dependent hydrolases"/>
    <property type="match status" value="1"/>
</dbReference>
<dbReference type="PROSITE" id="PS01120">
    <property type="entry name" value="UREASE_1"/>
    <property type="match status" value="1"/>
</dbReference>
<dbReference type="PROSITE" id="PS00145">
    <property type="entry name" value="UREASE_2"/>
    <property type="match status" value="1"/>
</dbReference>
<dbReference type="PROSITE" id="PS51368">
    <property type="entry name" value="UREASE_3"/>
    <property type="match status" value="1"/>
</dbReference>
<protein>
    <recommendedName>
        <fullName evidence="1">Urease subunit alpha</fullName>
        <ecNumber evidence="1">3.5.1.5</ecNumber>
    </recommendedName>
    <alternativeName>
        <fullName evidence="1">Urea amidohydrolase subunit alpha</fullName>
    </alternativeName>
</protein>
<proteinExistence type="evidence at protein level"/>
<feature type="chain" id="PRO_0000067561" description="Urease subunit alpha">
    <location>
        <begin position="1"/>
        <end position="572"/>
    </location>
</feature>
<feature type="domain" description="Urease" evidence="1">
    <location>
        <begin position="133"/>
        <end position="572"/>
    </location>
</feature>
<feature type="active site" description="Proton donor" evidence="1">
    <location>
        <position position="324"/>
    </location>
</feature>
<feature type="binding site" evidence="1">
    <location>
        <position position="138"/>
    </location>
    <ligand>
        <name>Ni(2+)</name>
        <dbReference type="ChEBI" id="CHEBI:49786"/>
        <label>1</label>
    </ligand>
</feature>
<feature type="binding site" evidence="1">
    <location>
        <position position="140"/>
    </location>
    <ligand>
        <name>Ni(2+)</name>
        <dbReference type="ChEBI" id="CHEBI:49786"/>
        <label>1</label>
    </ligand>
</feature>
<feature type="binding site" description="via carbamate group" evidence="1">
    <location>
        <position position="221"/>
    </location>
    <ligand>
        <name>Ni(2+)</name>
        <dbReference type="ChEBI" id="CHEBI:49786"/>
        <label>1</label>
    </ligand>
</feature>
<feature type="binding site" description="via carbamate group" evidence="1">
    <location>
        <position position="221"/>
    </location>
    <ligand>
        <name>Ni(2+)</name>
        <dbReference type="ChEBI" id="CHEBI:49786"/>
        <label>2</label>
    </ligand>
</feature>
<feature type="binding site" evidence="1">
    <location>
        <position position="223"/>
    </location>
    <ligand>
        <name>substrate</name>
    </ligand>
</feature>
<feature type="binding site" evidence="1">
    <location>
        <position position="250"/>
    </location>
    <ligand>
        <name>Ni(2+)</name>
        <dbReference type="ChEBI" id="CHEBI:49786"/>
        <label>2</label>
    </ligand>
</feature>
<feature type="binding site" evidence="1">
    <location>
        <position position="276"/>
    </location>
    <ligand>
        <name>Ni(2+)</name>
        <dbReference type="ChEBI" id="CHEBI:49786"/>
        <label>2</label>
    </ligand>
</feature>
<feature type="binding site" evidence="1">
    <location>
        <position position="364"/>
    </location>
    <ligand>
        <name>Ni(2+)</name>
        <dbReference type="ChEBI" id="CHEBI:49786"/>
        <label>1</label>
    </ligand>
</feature>
<feature type="modified residue" description="N6-carboxylysine" evidence="1">
    <location>
        <position position="221"/>
    </location>
</feature>
<feature type="sequence conflict" description="In Ref. 1; AAC43564 and 3; AAB01507." evidence="6" ref="1 3">
    <original>T</original>
    <variation>I</variation>
    <location>
        <position position="305"/>
    </location>
</feature>
<accession>P50047</accession>
<accession>F8HGK0</accession>
<accession>Q59970</accession>
<comment type="function">
    <text evidence="2">Ureolysis may allow urea to be employed as a nitrogen source for growth and produces ammonia which may protect from killing at low pH.</text>
</comment>
<comment type="catalytic activity">
    <reaction evidence="1">
        <text>urea + 2 H2O + H(+) = hydrogencarbonate + 2 NH4(+)</text>
        <dbReference type="Rhea" id="RHEA:20557"/>
        <dbReference type="ChEBI" id="CHEBI:15377"/>
        <dbReference type="ChEBI" id="CHEBI:15378"/>
        <dbReference type="ChEBI" id="CHEBI:16199"/>
        <dbReference type="ChEBI" id="CHEBI:17544"/>
        <dbReference type="ChEBI" id="CHEBI:28938"/>
        <dbReference type="EC" id="3.5.1.5"/>
    </reaction>
</comment>
<comment type="cofactor">
    <cofactor evidence="1">
        <name>Ni cation</name>
        <dbReference type="ChEBI" id="CHEBI:25516"/>
    </cofactor>
    <text evidence="1">Binds 2 nickel ions per subunit.</text>
</comment>
<comment type="biophysicochemical properties">
    <kinetics>
        <KM evidence="3">3.7 mM for urea (at pH 7.0 and 37 degrees Celsius)</KM>
        <text>Urea concentrations in the oral cavity of humans normally range from 3 mM to 10 mM.</text>
    </kinetics>
    <phDependence>
        <text evidence="3">Optimum pH is 7.0.</text>
    </phDependence>
    <temperatureDependence>
        <text evidence="3">Optimum temperature is 60 degrees Celsius.</text>
    </temperatureDependence>
</comment>
<comment type="pathway">
    <text evidence="1">Nitrogen metabolism; urea degradation; CO(2) and NH(3) from urea (urease route): step 1/1.</text>
</comment>
<comment type="subunit">
    <text evidence="1">Heterotrimer of UreA (gamma), UreB (beta) and UreC (alpha) subunits. Three heterotrimers associate to form the active enzyme.</text>
</comment>
<comment type="subcellular location">
    <subcellularLocation>
        <location evidence="1">Cytoplasm</location>
    </subcellularLocation>
</comment>
<comment type="induction">
    <text evidence="4 5">By low pH and excess glucose.</text>
</comment>
<comment type="PTM">
    <text evidence="1">Carboxylation allows a single lysine to coordinate two nickel ions.</text>
</comment>
<comment type="similarity">
    <text evidence="1">Belongs to the metallo-dependent hydrolases superfamily. Urease alpha subunit family.</text>
</comment>
<comment type="sequence caution" evidence="6">
    <conflict type="erroneous initiation">
        <sequence resource="EMBL-CDS" id="AEJ54136"/>
    </conflict>
    <text>Truncated N-terminus.</text>
</comment>